<proteinExistence type="inferred from homology"/>
<sequence length="629" mass="70546">MAEFETTFADLGLKAPILEALNDLGYEKPSPIQAECIPHLLNGRDVLGMAQTGSGKTAAFSLPLLQNLDPELKAPQILVLAPTRELAVQVAEAMTDFSKHMRGVNVVALYGGQRYDVQLRALRQGPQIVVGTPGRLLDHLKRGTLDLSKLSGLVLDEADEMLRMGFIEDVETIMAQIPEGHQTALFSATMPEAIRRITRRFMKEPQEVRIQSSVTTRPDISQSYWTVWGMRKNEALVRFLEAEDFDAAIIFVRTKNATLEVAEALERNGYNSAALNGDMNQALREQTLERLKDGRLDILIATDVAARGLDVERISLVVNYDIPMDSESYVHRIGRTGRAGRAGRALLFVENRERRLLRNIERTMKLTIPEVELPNAELLGKRRLEKFAAKVQQQLESSDLDQYRALLSKIQPTAEGEELDLETLAAALLKMAQGERTLIVPPDAPMRPKREFRDRDDRGPRDRNDRGPRGDREDRPRRERRDVGDMQLYRIEVGRDDGVEVRHIVGAIANEGDISSRYIGNIKLFASHSTIELPKGMPGEVLQHFTRTRILNKPMNMQLLGDAQPHTGGERRGGGRGFGGERREGGRNFSGERREGGRGDGRRFSGERREGRAPRRDDSTGRRRFGGDA</sequence>
<reference key="1">
    <citation type="journal article" date="2002" name="Nucleic Acids Res.">
        <title>Genome sequence of Shigella flexneri 2a: insights into pathogenicity through comparison with genomes of Escherichia coli K12 and O157.</title>
        <authorList>
            <person name="Jin Q."/>
            <person name="Yuan Z."/>
            <person name="Xu J."/>
            <person name="Wang Y."/>
            <person name="Shen Y."/>
            <person name="Lu W."/>
            <person name="Wang J."/>
            <person name="Liu H."/>
            <person name="Yang J."/>
            <person name="Yang F."/>
            <person name="Zhang X."/>
            <person name="Zhang J."/>
            <person name="Yang G."/>
            <person name="Wu H."/>
            <person name="Qu D."/>
            <person name="Dong J."/>
            <person name="Sun L."/>
            <person name="Xue Y."/>
            <person name="Zhao A."/>
            <person name="Gao Y."/>
            <person name="Zhu J."/>
            <person name="Kan B."/>
            <person name="Ding K."/>
            <person name="Chen S."/>
            <person name="Cheng H."/>
            <person name="Yao Z."/>
            <person name="He B."/>
            <person name="Chen R."/>
            <person name="Ma D."/>
            <person name="Qiang B."/>
            <person name="Wen Y."/>
            <person name="Hou Y."/>
            <person name="Yu J."/>
        </authorList>
    </citation>
    <scope>NUCLEOTIDE SEQUENCE [LARGE SCALE GENOMIC DNA]</scope>
    <source>
        <strain>301 / Serotype 2a</strain>
    </source>
</reference>
<reference key="2">
    <citation type="journal article" date="2003" name="Infect. Immun.">
        <title>Complete genome sequence and comparative genomics of Shigella flexneri serotype 2a strain 2457T.</title>
        <authorList>
            <person name="Wei J."/>
            <person name="Goldberg M.B."/>
            <person name="Burland V."/>
            <person name="Venkatesan M.M."/>
            <person name="Deng W."/>
            <person name="Fournier G."/>
            <person name="Mayhew G.F."/>
            <person name="Plunkett G. III"/>
            <person name="Rose D.J."/>
            <person name="Darling A."/>
            <person name="Mau B."/>
            <person name="Perna N.T."/>
            <person name="Payne S.M."/>
            <person name="Runyen-Janecky L.J."/>
            <person name="Zhou S."/>
            <person name="Schwartz D.C."/>
            <person name="Blattner F.R."/>
        </authorList>
    </citation>
    <scope>NUCLEOTIDE SEQUENCE [LARGE SCALE GENOMIC DNA]</scope>
    <source>
        <strain>ATCC 700930 / 2457T / Serotype 2a</strain>
    </source>
</reference>
<keyword id="KW-0067">ATP-binding</keyword>
<keyword id="KW-0963">Cytoplasm</keyword>
<keyword id="KW-0347">Helicase</keyword>
<keyword id="KW-0378">Hydrolase</keyword>
<keyword id="KW-0547">Nucleotide-binding</keyword>
<keyword id="KW-1185">Reference proteome</keyword>
<keyword id="KW-0694">RNA-binding</keyword>
<keyword id="KW-0346">Stress response</keyword>
<feature type="initiator methionine" description="Removed" evidence="1">
    <location>
        <position position="1"/>
    </location>
</feature>
<feature type="chain" id="PRO_0000055107" description="ATP-dependent RNA helicase DeaD">
    <location>
        <begin position="2"/>
        <end position="629"/>
    </location>
</feature>
<feature type="domain" description="Helicase ATP-binding" evidence="2">
    <location>
        <begin position="37"/>
        <end position="208"/>
    </location>
</feature>
<feature type="domain" description="Helicase C-terminal" evidence="2">
    <location>
        <begin position="232"/>
        <end position="379"/>
    </location>
</feature>
<feature type="region of interest" description="Disordered" evidence="3">
    <location>
        <begin position="438"/>
        <end position="481"/>
    </location>
</feature>
<feature type="region of interest" description="Disordered" evidence="3">
    <location>
        <begin position="560"/>
        <end position="629"/>
    </location>
</feature>
<feature type="short sequence motif" description="Q motif">
    <location>
        <begin position="6"/>
        <end position="34"/>
    </location>
</feature>
<feature type="short sequence motif" description="DEAD box">
    <location>
        <begin position="156"/>
        <end position="159"/>
    </location>
</feature>
<feature type="compositionally biased region" description="Basic and acidic residues" evidence="3">
    <location>
        <begin position="446"/>
        <end position="481"/>
    </location>
</feature>
<feature type="compositionally biased region" description="Basic and acidic residues" evidence="3">
    <location>
        <begin position="568"/>
        <end position="629"/>
    </location>
</feature>
<feature type="binding site" evidence="2">
    <location>
        <begin position="50"/>
        <end position="57"/>
    </location>
    <ligand>
        <name>ATP</name>
        <dbReference type="ChEBI" id="CHEBI:30616"/>
    </ligand>
</feature>
<accession>P0A9P8</accession>
<accession>P23304</accession>
<accession>Q8FD90</accession>
<dbReference type="EC" id="3.6.4.13" evidence="2"/>
<dbReference type="EMBL" id="AE005674">
    <property type="protein sequence ID" value="AAN44670.2"/>
    <property type="status" value="ALT_INIT"/>
    <property type="molecule type" value="Genomic_DNA"/>
</dbReference>
<dbReference type="EMBL" id="AE014073">
    <property type="protein sequence ID" value="AAP18484.1"/>
    <property type="status" value="ALT_INIT"/>
    <property type="molecule type" value="Genomic_DNA"/>
</dbReference>
<dbReference type="RefSeq" id="NP_708963.4">
    <property type="nucleotide sequence ID" value="NC_004337.2"/>
</dbReference>
<dbReference type="RefSeq" id="WP_001295553.1">
    <property type="nucleotide sequence ID" value="NZ_WPGW01000004.1"/>
</dbReference>
<dbReference type="SMR" id="P0A9P8"/>
<dbReference type="STRING" id="198214.SF3203"/>
<dbReference type="PaxDb" id="198214-SF3203"/>
<dbReference type="GeneID" id="1027133"/>
<dbReference type="GeneID" id="93778822"/>
<dbReference type="KEGG" id="sfl:SF3203"/>
<dbReference type="KEGG" id="sfx:S3420"/>
<dbReference type="PATRIC" id="fig|198214.7.peg.3803"/>
<dbReference type="HOGENOM" id="CLU_003041_21_1_6"/>
<dbReference type="Proteomes" id="UP000001006">
    <property type="component" value="Chromosome"/>
</dbReference>
<dbReference type="Proteomes" id="UP000002673">
    <property type="component" value="Chromosome"/>
</dbReference>
<dbReference type="GO" id="GO:0005829">
    <property type="term" value="C:cytosol"/>
    <property type="evidence" value="ECO:0007669"/>
    <property type="project" value="TreeGrafter"/>
</dbReference>
<dbReference type="GO" id="GO:0005840">
    <property type="term" value="C:ribosome"/>
    <property type="evidence" value="ECO:0007669"/>
    <property type="project" value="TreeGrafter"/>
</dbReference>
<dbReference type="GO" id="GO:0005524">
    <property type="term" value="F:ATP binding"/>
    <property type="evidence" value="ECO:0007669"/>
    <property type="project" value="UniProtKB-UniRule"/>
</dbReference>
<dbReference type="GO" id="GO:0016887">
    <property type="term" value="F:ATP hydrolysis activity"/>
    <property type="evidence" value="ECO:0007669"/>
    <property type="project" value="RHEA"/>
</dbReference>
<dbReference type="GO" id="GO:0003724">
    <property type="term" value="F:RNA helicase activity"/>
    <property type="evidence" value="ECO:0007669"/>
    <property type="project" value="UniProtKB-UniRule"/>
</dbReference>
<dbReference type="GO" id="GO:0033592">
    <property type="term" value="F:RNA strand annealing activity"/>
    <property type="evidence" value="ECO:0007669"/>
    <property type="project" value="TreeGrafter"/>
</dbReference>
<dbReference type="GO" id="GO:0070417">
    <property type="term" value="P:cellular response to cold"/>
    <property type="evidence" value="ECO:0007669"/>
    <property type="project" value="InterPro"/>
</dbReference>
<dbReference type="GO" id="GO:0000027">
    <property type="term" value="P:ribosomal large subunit assembly"/>
    <property type="evidence" value="ECO:0007669"/>
    <property type="project" value="UniProtKB-UniRule"/>
</dbReference>
<dbReference type="GO" id="GO:0006401">
    <property type="term" value="P:RNA catabolic process"/>
    <property type="evidence" value="ECO:0007669"/>
    <property type="project" value="UniProtKB-UniRule"/>
</dbReference>
<dbReference type="CDD" id="cd00268">
    <property type="entry name" value="DEADc"/>
    <property type="match status" value="1"/>
</dbReference>
<dbReference type="CDD" id="cd12499">
    <property type="entry name" value="RRM_EcCsdA_like"/>
    <property type="match status" value="1"/>
</dbReference>
<dbReference type="CDD" id="cd18787">
    <property type="entry name" value="SF2_C_DEAD"/>
    <property type="match status" value="1"/>
</dbReference>
<dbReference type="FunFam" id="3.30.70.330:FF:000068">
    <property type="entry name" value="ATP-dependent RNA helicase DeaD"/>
    <property type="match status" value="1"/>
</dbReference>
<dbReference type="FunFam" id="3.40.50.300:FF:000374">
    <property type="entry name" value="ATP-dependent RNA helicase DeaD"/>
    <property type="match status" value="1"/>
</dbReference>
<dbReference type="FunFam" id="3.40.50.300:FF:000108">
    <property type="entry name" value="ATP-dependent RNA helicase RhlE"/>
    <property type="match status" value="1"/>
</dbReference>
<dbReference type="Gene3D" id="3.30.70.330">
    <property type="match status" value="1"/>
</dbReference>
<dbReference type="Gene3D" id="3.40.50.300">
    <property type="entry name" value="P-loop containing nucleotide triphosphate hydrolases"/>
    <property type="match status" value="2"/>
</dbReference>
<dbReference type="HAMAP" id="MF_00964">
    <property type="entry name" value="DEAD_helicase_DeaD"/>
    <property type="match status" value="1"/>
</dbReference>
<dbReference type="InterPro" id="IPR021046">
    <property type="entry name" value="Cold-shock_DEAD_Abox_C"/>
</dbReference>
<dbReference type="InterPro" id="IPR034415">
    <property type="entry name" value="CsdA_RRM"/>
</dbReference>
<dbReference type="InterPro" id="IPR005580">
    <property type="entry name" value="DbpA/CsdA_RNA-bd_dom"/>
</dbReference>
<dbReference type="InterPro" id="IPR011545">
    <property type="entry name" value="DEAD/DEAH_box_helicase_dom"/>
</dbReference>
<dbReference type="InterPro" id="IPR050547">
    <property type="entry name" value="DEAD_box_RNA_helicases"/>
</dbReference>
<dbReference type="InterPro" id="IPR028618">
    <property type="entry name" value="DEAD_helicase_DeaD"/>
</dbReference>
<dbReference type="InterPro" id="IPR014001">
    <property type="entry name" value="Helicase_ATP-bd"/>
</dbReference>
<dbReference type="InterPro" id="IPR001650">
    <property type="entry name" value="Helicase_C-like"/>
</dbReference>
<dbReference type="InterPro" id="IPR012677">
    <property type="entry name" value="Nucleotide-bd_a/b_plait_sf"/>
</dbReference>
<dbReference type="InterPro" id="IPR027417">
    <property type="entry name" value="P-loop_NTPase"/>
</dbReference>
<dbReference type="InterPro" id="IPR000629">
    <property type="entry name" value="RNA-helicase_DEAD-box_CS"/>
</dbReference>
<dbReference type="InterPro" id="IPR014014">
    <property type="entry name" value="RNA_helicase_DEAD_Q_motif"/>
</dbReference>
<dbReference type="NCBIfam" id="NF008642">
    <property type="entry name" value="PRK11634.1"/>
    <property type="match status" value="1"/>
</dbReference>
<dbReference type="PANTHER" id="PTHR47963:SF8">
    <property type="entry name" value="ATP-DEPENDENT RNA HELICASE DEAD"/>
    <property type="match status" value="1"/>
</dbReference>
<dbReference type="PANTHER" id="PTHR47963">
    <property type="entry name" value="DEAD-BOX ATP-DEPENDENT RNA HELICASE 47, MITOCHONDRIAL"/>
    <property type="match status" value="1"/>
</dbReference>
<dbReference type="Pfam" id="PF03880">
    <property type="entry name" value="DbpA"/>
    <property type="match status" value="1"/>
</dbReference>
<dbReference type="Pfam" id="PF00270">
    <property type="entry name" value="DEAD"/>
    <property type="match status" value="1"/>
</dbReference>
<dbReference type="Pfam" id="PF12343">
    <property type="entry name" value="DeaD_C"/>
    <property type="match status" value="1"/>
</dbReference>
<dbReference type="Pfam" id="PF25399">
    <property type="entry name" value="DeaD_dimer"/>
    <property type="match status" value="1"/>
</dbReference>
<dbReference type="Pfam" id="PF00271">
    <property type="entry name" value="Helicase_C"/>
    <property type="match status" value="1"/>
</dbReference>
<dbReference type="SMART" id="SM00487">
    <property type="entry name" value="DEXDc"/>
    <property type="match status" value="1"/>
</dbReference>
<dbReference type="SMART" id="SM00490">
    <property type="entry name" value="HELICc"/>
    <property type="match status" value="1"/>
</dbReference>
<dbReference type="SUPFAM" id="SSF52540">
    <property type="entry name" value="P-loop containing nucleoside triphosphate hydrolases"/>
    <property type="match status" value="1"/>
</dbReference>
<dbReference type="PROSITE" id="PS00039">
    <property type="entry name" value="DEAD_ATP_HELICASE"/>
    <property type="match status" value="1"/>
</dbReference>
<dbReference type="PROSITE" id="PS51192">
    <property type="entry name" value="HELICASE_ATP_BIND_1"/>
    <property type="match status" value="1"/>
</dbReference>
<dbReference type="PROSITE" id="PS51194">
    <property type="entry name" value="HELICASE_CTER"/>
    <property type="match status" value="1"/>
</dbReference>
<dbReference type="PROSITE" id="PS51195">
    <property type="entry name" value="Q_MOTIF"/>
    <property type="match status" value="1"/>
</dbReference>
<organism>
    <name type="scientific">Shigella flexneri</name>
    <dbReference type="NCBI Taxonomy" id="623"/>
    <lineage>
        <taxon>Bacteria</taxon>
        <taxon>Pseudomonadati</taxon>
        <taxon>Pseudomonadota</taxon>
        <taxon>Gammaproteobacteria</taxon>
        <taxon>Enterobacterales</taxon>
        <taxon>Enterobacteriaceae</taxon>
        <taxon>Shigella</taxon>
    </lineage>
</organism>
<comment type="function">
    <text evidence="2">DEAD-box RNA helicase involved in various cellular processes at low temperature, including ribosome biogenesis, mRNA degradation and translation initiation.</text>
</comment>
<comment type="catalytic activity">
    <reaction evidence="2">
        <text>ATP + H2O = ADP + phosphate + H(+)</text>
        <dbReference type="Rhea" id="RHEA:13065"/>
        <dbReference type="ChEBI" id="CHEBI:15377"/>
        <dbReference type="ChEBI" id="CHEBI:15378"/>
        <dbReference type="ChEBI" id="CHEBI:30616"/>
        <dbReference type="ChEBI" id="CHEBI:43474"/>
        <dbReference type="ChEBI" id="CHEBI:456216"/>
        <dbReference type="EC" id="3.6.4.13"/>
    </reaction>
</comment>
<comment type="subcellular location">
    <subcellularLocation>
        <location evidence="2">Cytoplasm</location>
    </subcellularLocation>
</comment>
<comment type="similarity">
    <text evidence="2">Belongs to the DEAD box helicase family. DeaD/CsdA subfamily.</text>
</comment>
<comment type="sequence caution" evidence="4">
    <conflict type="erroneous initiation">
        <sequence resource="EMBL-CDS" id="AAN44670"/>
    </conflict>
    <text>Extended N-terminus.</text>
</comment>
<comment type="sequence caution" evidence="4">
    <conflict type="erroneous initiation">
        <sequence resource="EMBL-CDS" id="AAP18484"/>
    </conflict>
    <text>Extended N-terminus.</text>
</comment>
<evidence type="ECO:0000250" key="1"/>
<evidence type="ECO:0000255" key="2">
    <source>
        <dbReference type="HAMAP-Rule" id="MF_00964"/>
    </source>
</evidence>
<evidence type="ECO:0000256" key="3">
    <source>
        <dbReference type="SAM" id="MobiDB-lite"/>
    </source>
</evidence>
<evidence type="ECO:0000305" key="4"/>
<gene>
    <name evidence="2" type="primary">deaD</name>
    <name evidence="2" type="synonym">csdA</name>
    <name type="ordered locus">SF3203</name>
    <name type="ordered locus">S3420</name>
</gene>
<protein>
    <recommendedName>
        <fullName evidence="2">ATP-dependent RNA helicase DeaD</fullName>
        <ecNumber evidence="2">3.6.4.13</ecNumber>
    </recommendedName>
    <alternativeName>
        <fullName evidence="2">Cold-shock DEAD box protein A</fullName>
    </alternativeName>
</protein>
<name>DEAD_SHIFL</name>